<sequence length="558" mass="61962">MEESAPFSIVSTVKALSGALRGDAGHEADISREREKLWFKESSAKNLRNRDFLAPNTVLTTLYAGGEVPSDILSAVHTLRGSGVLPIGATEVTTEGLRVCVDRCAAFRGVLCGIMPYLKPAAQRQGCVLINCPALHTKQSVPSPDTLALGQLRTILIADHLGAQLRRQGYTVSFCPALPQESDIVNFLKTLGIDWPTVPVSWTNEDREEKMKKALENSAYRDRETEKGKRRSRGEEIEGEKRGLKEDVRINLKQVVQDENLNGYDPSLGTCTVQREALCHLAQLDSATADFPASTTTALHVTSCQDEFRQQQTAMLWRAAGATALQRLVICGPVKTPGVQMNAAQYFQLRKAQMKEASEMKYGDQVEGQTWDDIIRVMTSATVRFELLSTVHTSPVTLDVQRDSGVSTKGPRGGVFVMYNCARLHTLFSSYEKGVEQGLYPEIPGGTELDFSALKEEGEWLLLFNYLIPFSEILDQSAQTLEHEGGGARVQLRTEQVCRFLVSLSKDFSSYYNRVHVLGEPLPHLFNQMFCRLLLLRALRELYHSALDSLNLPPIPQL</sequence>
<organism>
    <name type="scientific">Danio rerio</name>
    <name type="common">Zebrafish</name>
    <name type="synonym">Brachydanio rerio</name>
    <dbReference type="NCBI Taxonomy" id="7955"/>
    <lineage>
        <taxon>Eukaryota</taxon>
        <taxon>Metazoa</taxon>
        <taxon>Chordata</taxon>
        <taxon>Craniata</taxon>
        <taxon>Vertebrata</taxon>
        <taxon>Euteleostomi</taxon>
        <taxon>Actinopterygii</taxon>
        <taxon>Neopterygii</taxon>
        <taxon>Teleostei</taxon>
        <taxon>Ostariophysi</taxon>
        <taxon>Cypriniformes</taxon>
        <taxon>Danionidae</taxon>
        <taxon>Danioninae</taxon>
        <taxon>Danio</taxon>
    </lineage>
</organism>
<reference key="1">
    <citation type="submission" date="2006-10" db="EMBL/GenBank/DDBJ databases">
        <authorList>
            <consortium name="NIH - Zebrafish Gene Collection (ZGC) project"/>
        </authorList>
    </citation>
    <scope>NUCLEOTIDE SEQUENCE [LARGE SCALE MRNA]</scope>
</reference>
<gene>
    <name type="primary">dalrd3</name>
    <name type="ORF">zgc:153958</name>
</gene>
<feature type="chain" id="PRO_0000315851" description="DALR anticodon-binding domain-containing protein 3">
    <location>
        <begin position="1"/>
        <end position="558"/>
    </location>
</feature>
<feature type="region of interest" description="Disordered" evidence="1">
    <location>
        <begin position="213"/>
        <end position="240"/>
    </location>
</feature>
<protein>
    <recommendedName>
        <fullName>DALR anticodon-binding domain-containing protein 3</fullName>
    </recommendedName>
</protein>
<name>DALD3_DANRE</name>
<accession>A0JML8</accession>
<evidence type="ECO:0000256" key="1">
    <source>
        <dbReference type="SAM" id="MobiDB-lite"/>
    </source>
</evidence>
<proteinExistence type="evidence at transcript level"/>
<dbReference type="EMBL" id="BC125925">
    <property type="protein sequence ID" value="AAI25926.1"/>
    <property type="molecule type" value="mRNA"/>
</dbReference>
<dbReference type="SMR" id="A0JML8"/>
<dbReference type="FunCoup" id="A0JML8">
    <property type="interactions" value="2610"/>
</dbReference>
<dbReference type="STRING" id="7955.ENSDARP00000090057"/>
<dbReference type="PaxDb" id="7955-ENSDARP00000090057"/>
<dbReference type="PeptideAtlas" id="A0JML8"/>
<dbReference type="AGR" id="ZFIN:ZDB-GENE-061103-415"/>
<dbReference type="ZFIN" id="ZDB-GENE-061103-415">
    <property type="gene designation" value="dalrd3"/>
</dbReference>
<dbReference type="eggNOG" id="KOG1195">
    <property type="taxonomic scope" value="Eukaryota"/>
</dbReference>
<dbReference type="InParanoid" id="A0JML8"/>
<dbReference type="PRO" id="PR:A0JML8"/>
<dbReference type="Proteomes" id="UP000000437">
    <property type="component" value="Unplaced"/>
</dbReference>
<dbReference type="GO" id="GO:0004814">
    <property type="term" value="F:arginine-tRNA ligase activity"/>
    <property type="evidence" value="ECO:0007669"/>
    <property type="project" value="InterPro"/>
</dbReference>
<dbReference type="GO" id="GO:0005524">
    <property type="term" value="F:ATP binding"/>
    <property type="evidence" value="ECO:0007669"/>
    <property type="project" value="InterPro"/>
</dbReference>
<dbReference type="GO" id="GO:0000049">
    <property type="term" value="F:tRNA binding"/>
    <property type="evidence" value="ECO:0000318"/>
    <property type="project" value="GO_Central"/>
</dbReference>
<dbReference type="GO" id="GO:0006420">
    <property type="term" value="P:arginyl-tRNA aminoacylation"/>
    <property type="evidence" value="ECO:0007669"/>
    <property type="project" value="InterPro"/>
</dbReference>
<dbReference type="GO" id="GO:0106217">
    <property type="term" value="P:tRNA C3-cytosine methylation"/>
    <property type="evidence" value="ECO:0000318"/>
    <property type="project" value="GO_Central"/>
</dbReference>
<dbReference type="Gene3D" id="1.10.730.10">
    <property type="entry name" value="Isoleucyl-tRNA Synthetase, Domain 1"/>
    <property type="match status" value="1"/>
</dbReference>
<dbReference type="InterPro" id="IPR008909">
    <property type="entry name" value="DALR_anticod-bd"/>
</dbReference>
<dbReference type="InterPro" id="IPR037380">
    <property type="entry name" value="DALRD3"/>
</dbReference>
<dbReference type="InterPro" id="IPR009080">
    <property type="entry name" value="tRNAsynth_Ia_anticodon-bd"/>
</dbReference>
<dbReference type="PANTHER" id="PTHR16043:SF1">
    <property type="entry name" value="DALR ANTICODON-BINDING DOMAIN-CONTAINING PROTEIN 3"/>
    <property type="match status" value="1"/>
</dbReference>
<dbReference type="PANTHER" id="PTHR16043">
    <property type="entry name" value="DALRD3 PROTEIN"/>
    <property type="match status" value="1"/>
</dbReference>
<dbReference type="Pfam" id="PF05746">
    <property type="entry name" value="DALR_1"/>
    <property type="match status" value="1"/>
</dbReference>
<dbReference type="SMART" id="SM00836">
    <property type="entry name" value="DALR_1"/>
    <property type="match status" value="1"/>
</dbReference>
<dbReference type="SUPFAM" id="SSF47323">
    <property type="entry name" value="Anticodon-binding domain of a subclass of class I aminoacyl-tRNA synthetases"/>
    <property type="match status" value="1"/>
</dbReference>
<keyword id="KW-1185">Reference proteome</keyword>